<reference key="1">
    <citation type="journal article" date="1995" name="Plant Mol. Biol.">
        <title>Cloning and sequence analysis of a signal peptidase I from the thermophilic cyanobacterium Phormidium laminosum.</title>
        <authorList>
            <person name="Packer J.C.L."/>
            <person name="Andre D."/>
            <person name="Howe C.J."/>
        </authorList>
    </citation>
    <scope>NUCLEOTIDE SEQUENCE [GENOMIC DNA]</scope>
</reference>
<gene>
    <name type="primary">lepB</name>
    <name type="synonym">lep</name>
</gene>
<organism>
    <name type="scientific">Leptolyngbya laminosa</name>
    <name type="common">Phormidium laminosum</name>
    <dbReference type="NCBI Taxonomy" id="477181"/>
    <lineage>
        <taxon>Bacteria</taxon>
        <taxon>Bacillati</taxon>
        <taxon>Cyanobacteriota</taxon>
        <taxon>Cyanophyceae</taxon>
        <taxon>Leptolyngbyales</taxon>
        <taxon>Leptolyngbyaceae</taxon>
        <taxon>Leptolyngbya group</taxon>
        <taxon>Leptolyngbya</taxon>
    </lineage>
</organism>
<accession>Q51876</accession>
<evidence type="ECO:0000250" key="1"/>
<evidence type="ECO:0000255" key="2"/>
<evidence type="ECO:0000256" key="3">
    <source>
        <dbReference type="SAM" id="MobiDB-lite"/>
    </source>
</evidence>
<evidence type="ECO:0000305" key="4"/>
<proteinExistence type="inferred from homology"/>
<protein>
    <recommendedName>
        <fullName>Signal peptidase I</fullName>
        <shortName>SPase I</shortName>
        <ecNumber>3.4.21.89</ecNumber>
    </recommendedName>
    <alternativeName>
        <fullName>Leader peptidase I</fullName>
    </alternativeName>
</protein>
<keyword id="KW-1003">Cell membrane</keyword>
<keyword id="KW-0378">Hydrolase</keyword>
<keyword id="KW-0472">Membrane</keyword>
<keyword id="KW-0645">Protease</keyword>
<keyword id="KW-0812">Transmembrane</keyword>
<keyword id="KW-1133">Transmembrane helix</keyword>
<feature type="chain" id="PRO_0000109512" description="Signal peptidase I">
    <location>
        <begin position="1"/>
        <end position="203"/>
    </location>
</feature>
<feature type="topological domain" description="Cytoplasmic" evidence="2">
    <location>
        <begin position="1"/>
        <end position="33"/>
    </location>
</feature>
<feature type="transmembrane region" description="Helical" evidence="2">
    <location>
        <begin position="34"/>
        <end position="50"/>
    </location>
</feature>
<feature type="topological domain" description="Extracellular" evidence="2">
    <location>
        <begin position="51"/>
        <end position="203"/>
    </location>
</feature>
<feature type="region of interest" description="Disordered" evidence="3">
    <location>
        <begin position="1"/>
        <end position="26"/>
    </location>
</feature>
<feature type="compositionally biased region" description="Low complexity" evidence="3">
    <location>
        <begin position="17"/>
        <end position="26"/>
    </location>
</feature>
<feature type="active site" evidence="1">
    <location>
        <position position="59"/>
    </location>
</feature>
<feature type="active site" evidence="1">
    <location>
        <position position="109"/>
    </location>
</feature>
<comment type="catalytic activity">
    <reaction>
        <text>Cleavage of hydrophobic, N-terminal signal or leader sequences from secreted and periplasmic proteins.</text>
        <dbReference type="EC" id="3.4.21.89"/>
    </reaction>
</comment>
<comment type="subcellular location">
    <subcellularLocation>
        <location evidence="4">Cell membrane</location>
        <topology evidence="4">Single-pass type II membrane protein</topology>
    </subcellularLocation>
</comment>
<comment type="similarity">
    <text evidence="4">Belongs to the peptidase S26 family.</text>
</comment>
<sequence>MSSESDSPTPQTPPAQPAASQPKADSPLMEGIKTIGLSVVLALGIRTFVAEARYIPSESMLPTLEVNDRLIVEKISYHFNPPRRGDIIVFHPTEALKQQNPSLNEAFIKRVIGLPGETVQVTGGRVLINGQPLEENYIQSPPDYQWGPEKVPADSFLVLGDNRNNSYDSHFWGYVPRQNIIGRAVVRFWPVNRLGELGPPPSY</sequence>
<name>LEP_LEPLM</name>
<dbReference type="EC" id="3.4.21.89"/>
<dbReference type="EMBL" id="X81990">
    <property type="protein sequence ID" value="CAA57518.1"/>
    <property type="molecule type" value="Genomic_DNA"/>
</dbReference>
<dbReference type="PIR" id="S51921">
    <property type="entry name" value="S51921"/>
</dbReference>
<dbReference type="SMR" id="Q51876"/>
<dbReference type="MEROPS" id="S26.008"/>
<dbReference type="GO" id="GO:0005886">
    <property type="term" value="C:plasma membrane"/>
    <property type="evidence" value="ECO:0007669"/>
    <property type="project" value="UniProtKB-SubCell"/>
</dbReference>
<dbReference type="GO" id="GO:0004252">
    <property type="term" value="F:serine-type endopeptidase activity"/>
    <property type="evidence" value="ECO:0007669"/>
    <property type="project" value="UniProtKB-EC"/>
</dbReference>
<dbReference type="GO" id="GO:0006465">
    <property type="term" value="P:signal peptide processing"/>
    <property type="evidence" value="ECO:0007669"/>
    <property type="project" value="InterPro"/>
</dbReference>
<dbReference type="CDD" id="cd06530">
    <property type="entry name" value="S26_SPase_I"/>
    <property type="match status" value="1"/>
</dbReference>
<dbReference type="Gene3D" id="2.10.109.10">
    <property type="entry name" value="Umud Fragment, subunit A"/>
    <property type="match status" value="1"/>
</dbReference>
<dbReference type="InterPro" id="IPR036286">
    <property type="entry name" value="LexA/Signal_pep-like_sf"/>
</dbReference>
<dbReference type="InterPro" id="IPR000223">
    <property type="entry name" value="Pept_S26A_signal_pept_1"/>
</dbReference>
<dbReference type="InterPro" id="IPR019758">
    <property type="entry name" value="Pept_S26A_signal_pept_1_CS"/>
</dbReference>
<dbReference type="InterPro" id="IPR019757">
    <property type="entry name" value="Pept_S26A_signal_pept_1_Lys-AS"/>
</dbReference>
<dbReference type="InterPro" id="IPR019756">
    <property type="entry name" value="Pept_S26A_signal_pept_1_Ser-AS"/>
</dbReference>
<dbReference type="InterPro" id="IPR019533">
    <property type="entry name" value="Peptidase_S26"/>
</dbReference>
<dbReference type="NCBIfam" id="TIGR02227">
    <property type="entry name" value="sigpep_I_bact"/>
    <property type="match status" value="1"/>
</dbReference>
<dbReference type="PANTHER" id="PTHR43390:SF1">
    <property type="entry name" value="CHLOROPLAST PROCESSING PEPTIDASE"/>
    <property type="match status" value="1"/>
</dbReference>
<dbReference type="PANTHER" id="PTHR43390">
    <property type="entry name" value="SIGNAL PEPTIDASE I"/>
    <property type="match status" value="1"/>
</dbReference>
<dbReference type="Pfam" id="PF10502">
    <property type="entry name" value="Peptidase_S26"/>
    <property type="match status" value="1"/>
</dbReference>
<dbReference type="PRINTS" id="PR00727">
    <property type="entry name" value="LEADERPTASE"/>
</dbReference>
<dbReference type="SUPFAM" id="SSF51306">
    <property type="entry name" value="LexA/Signal peptidase"/>
    <property type="match status" value="1"/>
</dbReference>
<dbReference type="PROSITE" id="PS00501">
    <property type="entry name" value="SPASE_I_1"/>
    <property type="match status" value="1"/>
</dbReference>
<dbReference type="PROSITE" id="PS00760">
    <property type="entry name" value="SPASE_I_2"/>
    <property type="match status" value="1"/>
</dbReference>
<dbReference type="PROSITE" id="PS00761">
    <property type="entry name" value="SPASE_I_3"/>
    <property type="match status" value="1"/>
</dbReference>